<reference key="1">
    <citation type="journal article" date="2005" name="Mol. Genet. Genomics">
        <title>A fine physical map of the rice chromosome 5.</title>
        <authorList>
            <person name="Cheng C.-H."/>
            <person name="Chung M.C."/>
            <person name="Liu S.-M."/>
            <person name="Chen S.-K."/>
            <person name="Kao F.Y."/>
            <person name="Lin S.-J."/>
            <person name="Hsiao S.-H."/>
            <person name="Tseng I.C."/>
            <person name="Hsing Y.-I.C."/>
            <person name="Wu H.-P."/>
            <person name="Chen C.-S."/>
            <person name="Shaw J.-F."/>
            <person name="Wu J."/>
            <person name="Matsumoto T."/>
            <person name="Sasaki T."/>
            <person name="Chen H.-C."/>
            <person name="Chow T.-Y."/>
        </authorList>
    </citation>
    <scope>NUCLEOTIDE SEQUENCE [LARGE SCALE GENOMIC DNA]</scope>
    <source>
        <strain>cv. Nipponbare</strain>
    </source>
</reference>
<reference key="2">
    <citation type="journal article" date="2005" name="Nature">
        <title>The map-based sequence of the rice genome.</title>
        <authorList>
            <consortium name="International rice genome sequencing project (IRGSP)"/>
        </authorList>
    </citation>
    <scope>NUCLEOTIDE SEQUENCE [LARGE SCALE GENOMIC DNA]</scope>
    <source>
        <strain>cv. Nipponbare</strain>
    </source>
</reference>
<reference key="3">
    <citation type="journal article" date="2008" name="Nucleic Acids Res.">
        <title>The rice annotation project database (RAP-DB): 2008 update.</title>
        <authorList>
            <consortium name="The rice annotation project (RAP)"/>
        </authorList>
    </citation>
    <scope>GENOME REANNOTATION</scope>
    <source>
        <strain>cv. Nipponbare</strain>
    </source>
</reference>
<reference key="4">
    <citation type="journal article" date="2013" name="Rice">
        <title>Improvement of the Oryza sativa Nipponbare reference genome using next generation sequence and optical map data.</title>
        <authorList>
            <person name="Kawahara Y."/>
            <person name="de la Bastide M."/>
            <person name="Hamilton J.P."/>
            <person name="Kanamori H."/>
            <person name="McCombie W.R."/>
            <person name="Ouyang S."/>
            <person name="Schwartz D.C."/>
            <person name="Tanaka T."/>
            <person name="Wu J."/>
            <person name="Zhou S."/>
            <person name="Childs K.L."/>
            <person name="Davidson R.M."/>
            <person name="Lin H."/>
            <person name="Quesada-Ocampo L."/>
            <person name="Vaillancourt B."/>
            <person name="Sakai H."/>
            <person name="Lee S.S."/>
            <person name="Kim J."/>
            <person name="Numa H."/>
            <person name="Itoh T."/>
            <person name="Buell C.R."/>
            <person name="Matsumoto T."/>
        </authorList>
    </citation>
    <scope>GENOME REANNOTATION</scope>
    <source>
        <strain>cv. Nipponbare</strain>
    </source>
</reference>
<reference key="5">
    <citation type="journal article" date="2003" name="Science">
        <title>Collection, mapping, and annotation of over 28,000 cDNA clones from japonica rice.</title>
        <authorList>
            <consortium name="The rice full-length cDNA consortium"/>
        </authorList>
    </citation>
    <scope>NUCLEOTIDE SEQUENCE [LARGE SCALE MRNA]</scope>
    <source>
        <strain>cv. Nipponbare</strain>
    </source>
</reference>
<reference key="6">
    <citation type="journal article" date="2006" name="Plant Physiol.">
        <title>Whole-genome analysis of Oryza sativa reveals similar architecture of two-component signaling machinery with Arabidopsis.</title>
        <authorList>
            <person name="Pareek A."/>
            <person name="Singh A."/>
            <person name="Kumar M."/>
            <person name="Kushwaha H.R."/>
            <person name="Lynn A.M."/>
            <person name="Singla-Pareek S.L."/>
        </authorList>
    </citation>
    <scope>DISRUPTION PHENOTYPE</scope>
</reference>
<reference key="7">
    <citation type="journal article" date="2007" name="Plant Physiol.">
        <title>Nomenclature for two-component signaling elements of rice.</title>
        <authorList>
            <person name="Schaller G.E."/>
            <person name="Doi K."/>
            <person name="Hwang I."/>
            <person name="Kieber J.J."/>
            <person name="Khurana J.P."/>
            <person name="Kurata N."/>
            <person name="Mizuno T."/>
            <person name="Pareek A."/>
            <person name="Shiu S.H."/>
            <person name="Wu P."/>
            <person name="Yip W.K."/>
        </authorList>
    </citation>
    <scope>GENE FAMILY</scope>
    <scope>NOMENCLATURE</scope>
</reference>
<gene>
    <name evidence="5" type="primary">PHP5</name>
    <name evidence="8" type="ordered locus">Os05g0521300</name>
    <name evidence="6" type="ordered locus">LOC_Os05g44570</name>
    <name evidence="7" type="ORF">P0483D07.18</name>
</gene>
<comment type="function">
    <text evidence="1">Functions as a two-component phosphorelay mediator between cytokinin sensor histidine kinases and response regulators (B-type ARRs). Plays an important role in propagating cytokinin signal transduction.</text>
</comment>
<comment type="disruption phenotype">
    <text evidence="3">Dwarf, narrow leaf, sterility and small grain phenotypes.</text>
</comment>
<comment type="caution">
    <text evidence="6">Lacks the conserved active histidine at position 79 that mediates the phosphotransfer. Shows a conserved HPt domain that may have some alternative degenerated phosphorelay role in cell signaling.</text>
</comment>
<comment type="sequence caution" evidence="6">
    <conflict type="erroneous gene model prediction">
        <sequence resource="EMBL-CDS" id="BAF17988"/>
    </conflict>
</comment>
<feature type="chain" id="PRO_0000433815" description="Pseudo histidine-containing phosphotransfer protein 5">
    <location>
        <begin position="1"/>
        <end position="152"/>
    </location>
</feature>
<feature type="domain" description="HPt" evidence="2">
    <location>
        <begin position="38"/>
        <end position="140"/>
    </location>
</feature>
<accession>Q6F303</accession>
<accession>A0A0P0WPW1</accession>
<accession>Q0DGN5</accession>
<organism>
    <name type="scientific">Oryza sativa subsp. japonica</name>
    <name type="common">Rice</name>
    <dbReference type="NCBI Taxonomy" id="39947"/>
    <lineage>
        <taxon>Eukaryota</taxon>
        <taxon>Viridiplantae</taxon>
        <taxon>Streptophyta</taxon>
        <taxon>Embryophyta</taxon>
        <taxon>Tracheophyta</taxon>
        <taxon>Spermatophyta</taxon>
        <taxon>Magnoliopsida</taxon>
        <taxon>Liliopsida</taxon>
        <taxon>Poales</taxon>
        <taxon>Poaceae</taxon>
        <taxon>BOP clade</taxon>
        <taxon>Oryzoideae</taxon>
        <taxon>Oryzeae</taxon>
        <taxon>Oryzinae</taxon>
        <taxon>Oryza</taxon>
        <taxon>Oryza sativa</taxon>
    </lineage>
</organism>
<dbReference type="EMBL" id="AC130611">
    <property type="protein sequence ID" value="AAT69671.1"/>
    <property type="molecule type" value="Genomic_DNA"/>
</dbReference>
<dbReference type="EMBL" id="AP008211">
    <property type="protein sequence ID" value="BAF17988.1"/>
    <property type="status" value="ALT_SEQ"/>
    <property type="molecule type" value="Genomic_DNA"/>
</dbReference>
<dbReference type="EMBL" id="AP014961">
    <property type="protein sequence ID" value="BAS94941.1"/>
    <property type="molecule type" value="Genomic_DNA"/>
</dbReference>
<dbReference type="EMBL" id="AK065361">
    <property type="protein sequence ID" value="BAG89486.1"/>
    <property type="molecule type" value="mRNA"/>
</dbReference>
<dbReference type="EMBL" id="AK120693">
    <property type="protein sequence ID" value="BAH00128.1"/>
    <property type="molecule type" value="mRNA"/>
</dbReference>
<dbReference type="RefSeq" id="XP_015639475.1">
    <property type="nucleotide sequence ID" value="XM_015783989.1"/>
</dbReference>
<dbReference type="RefSeq" id="XP_015639479.1">
    <property type="nucleotide sequence ID" value="XM_015783993.1"/>
</dbReference>
<dbReference type="SMR" id="Q6F303"/>
<dbReference type="FunCoup" id="Q6F303">
    <property type="interactions" value="6"/>
</dbReference>
<dbReference type="STRING" id="39947.Q6F303"/>
<dbReference type="PaxDb" id="39947-Q6F303"/>
<dbReference type="EnsemblPlants" id="Os05t0521300-03">
    <property type="protein sequence ID" value="Os05t0521300-03"/>
    <property type="gene ID" value="Os05g0521300"/>
</dbReference>
<dbReference type="Gramene" id="Os05t0521300-03">
    <property type="protein sequence ID" value="Os05t0521300-03"/>
    <property type="gene ID" value="Os05g0521300"/>
</dbReference>
<dbReference type="KEGG" id="dosa:Os05g0521300"/>
<dbReference type="InParanoid" id="Q6F303"/>
<dbReference type="OMA" id="DGYMHQF"/>
<dbReference type="OrthoDB" id="3176171at2759"/>
<dbReference type="Proteomes" id="UP000000763">
    <property type="component" value="Chromosome 5"/>
</dbReference>
<dbReference type="Proteomes" id="UP000059680">
    <property type="component" value="Chromosome 5"/>
</dbReference>
<dbReference type="ExpressionAtlas" id="Q6F303">
    <property type="expression patterns" value="baseline and differential"/>
</dbReference>
<dbReference type="GO" id="GO:0005737">
    <property type="term" value="C:cytoplasm"/>
    <property type="evidence" value="ECO:0000318"/>
    <property type="project" value="GO_Central"/>
</dbReference>
<dbReference type="GO" id="GO:0005634">
    <property type="term" value="C:nucleus"/>
    <property type="evidence" value="ECO:0000318"/>
    <property type="project" value="GO_Central"/>
</dbReference>
<dbReference type="GO" id="GO:0009927">
    <property type="term" value="F:histidine phosphotransfer kinase activity"/>
    <property type="evidence" value="ECO:0000318"/>
    <property type="project" value="GO_Central"/>
</dbReference>
<dbReference type="GO" id="GO:0043424">
    <property type="term" value="F:protein histidine kinase binding"/>
    <property type="evidence" value="ECO:0000318"/>
    <property type="project" value="GO_Central"/>
</dbReference>
<dbReference type="GO" id="GO:0009736">
    <property type="term" value="P:cytokinin-activated signaling pathway"/>
    <property type="evidence" value="ECO:0000318"/>
    <property type="project" value="GO_Central"/>
</dbReference>
<dbReference type="GO" id="GO:0000160">
    <property type="term" value="P:phosphorelay signal transduction system"/>
    <property type="evidence" value="ECO:0000318"/>
    <property type="project" value="GO_Central"/>
</dbReference>
<dbReference type="FunFam" id="1.20.120.160:FF:000005">
    <property type="entry name" value="Histidine-containing phosphotransfer protein 4"/>
    <property type="match status" value="1"/>
</dbReference>
<dbReference type="Gene3D" id="1.20.120.160">
    <property type="entry name" value="HPT domain"/>
    <property type="match status" value="1"/>
</dbReference>
<dbReference type="InterPro" id="IPR045871">
    <property type="entry name" value="AHP1-5/YPD1"/>
</dbReference>
<dbReference type="InterPro" id="IPR036641">
    <property type="entry name" value="HPT_dom_sf"/>
</dbReference>
<dbReference type="InterPro" id="IPR008207">
    <property type="entry name" value="Sig_transdc_His_kin_Hpt_dom"/>
</dbReference>
<dbReference type="PANTHER" id="PTHR28242">
    <property type="entry name" value="PHOSPHORELAY INTERMEDIATE PROTEIN YPD1"/>
    <property type="match status" value="1"/>
</dbReference>
<dbReference type="PANTHER" id="PTHR28242:SF42">
    <property type="entry name" value="PSEUDO HISTIDINE-CONTAINING PHOSPHOTRANSFER PROTEIN 5"/>
    <property type="match status" value="1"/>
</dbReference>
<dbReference type="Pfam" id="PF01627">
    <property type="entry name" value="Hpt"/>
    <property type="match status" value="1"/>
</dbReference>
<dbReference type="SUPFAM" id="SSF47226">
    <property type="entry name" value="Histidine-containing phosphotransfer domain, HPT domain"/>
    <property type="match status" value="1"/>
</dbReference>
<sequence>MEYGNLRRQAASLKKSLFDQGYLDEQFCQVEDLQDEANPNFAEEVVSLFFKDSTRVMLNFEQAIEKHPKDFARWDTHMQQLKGSCSSIGASRVKNECTSFRNFCGEENAEGCTRSFQKVKREHAVLRQKWESYFQLLRQAGPAGTATRPAGK</sequence>
<evidence type="ECO:0000250" key="1">
    <source>
        <dbReference type="UniProtKB" id="Q8L9T7"/>
    </source>
</evidence>
<evidence type="ECO:0000255" key="2">
    <source>
        <dbReference type="PROSITE-ProRule" id="PRU00110"/>
    </source>
</evidence>
<evidence type="ECO:0000269" key="3">
    <source>
    </source>
</evidence>
<evidence type="ECO:0000303" key="4">
    <source>
    </source>
</evidence>
<evidence type="ECO:0000303" key="5">
    <source>
    </source>
</evidence>
<evidence type="ECO:0000305" key="6"/>
<evidence type="ECO:0000312" key="7">
    <source>
        <dbReference type="EMBL" id="AAT69671.1"/>
    </source>
</evidence>
<evidence type="ECO:0000312" key="8">
    <source>
        <dbReference type="EMBL" id="BAF17988.1"/>
    </source>
</evidence>
<protein>
    <recommendedName>
        <fullName evidence="5">Pseudo histidine-containing phosphotransfer protein 5</fullName>
    </recommendedName>
    <alternativeName>
        <fullName evidence="4">OsHpt5</fullName>
    </alternativeName>
</protein>
<keyword id="KW-0932">Cytokinin signaling pathway</keyword>
<keyword id="KW-1185">Reference proteome</keyword>
<keyword id="KW-0902">Two-component regulatory system</keyword>
<name>PHP5_ORYSJ</name>
<proteinExistence type="evidence at transcript level"/>